<dbReference type="EMBL" id="AC113174">
    <property type="status" value="NOT_ANNOTATED_CDS"/>
    <property type="molecule type" value="Genomic_DNA"/>
</dbReference>
<dbReference type="EMBL" id="AL591848">
    <property type="status" value="NOT_ANNOTATED_CDS"/>
    <property type="molecule type" value="Genomic_DNA"/>
</dbReference>
<dbReference type="SMR" id="B7ZC32"/>
<dbReference type="FunCoup" id="B7ZC32">
    <property type="interactions" value="3"/>
</dbReference>
<dbReference type="IntAct" id="B7ZC32">
    <property type="interactions" value="2"/>
</dbReference>
<dbReference type="MINT" id="B7ZC32"/>
<dbReference type="GlyConnect" id="2836">
    <property type="glycosylation" value="1 N-Linked glycan (1 site)"/>
</dbReference>
<dbReference type="GlyCosmos" id="B7ZC32">
    <property type="glycosylation" value="1 site, 1 glycan"/>
</dbReference>
<dbReference type="GlyGen" id="B7ZC32">
    <property type="glycosylation" value="1 site, 1 N-linked glycan (1 site)"/>
</dbReference>
<dbReference type="iPTMnet" id="B7ZC32"/>
<dbReference type="PhosphoSitePlus" id="B7ZC32"/>
<dbReference type="SwissPalm" id="B7ZC32"/>
<dbReference type="BioMuta" id="HGNC:49205"/>
<dbReference type="jPOST" id="B7ZC32"/>
<dbReference type="MassIVE" id="B7ZC32"/>
<dbReference type="PeptideAtlas" id="B7ZC32"/>
<dbReference type="ProteomicsDB" id="7170"/>
<dbReference type="AGR" id="HGNC:49205"/>
<dbReference type="GeneCards" id="KIF28P"/>
<dbReference type="HGNC" id="HGNC:49205">
    <property type="gene designation" value="KIF28P"/>
</dbReference>
<dbReference type="neXtProt" id="NX_B7ZC32"/>
<dbReference type="InParanoid" id="B7ZC32"/>
<dbReference type="PAN-GO" id="B7ZC32">
    <property type="GO annotations" value="6 GO annotations based on evolutionary models"/>
</dbReference>
<dbReference type="PathwayCommons" id="B7ZC32"/>
<dbReference type="Reactome" id="R-HSA-6811434">
    <property type="pathway name" value="COPI-dependent Golgi-to-ER retrograde traffic"/>
</dbReference>
<dbReference type="Reactome" id="R-HSA-983189">
    <property type="pathway name" value="Kinesins"/>
</dbReference>
<dbReference type="SignaLink" id="B7ZC32"/>
<dbReference type="ChiTaRS" id="KIF28P">
    <property type="organism name" value="human"/>
</dbReference>
<dbReference type="Pharos" id="B7ZC32">
    <property type="development level" value="Tdark"/>
</dbReference>
<dbReference type="PRO" id="PR:B7ZC32"/>
<dbReference type="Proteomes" id="UP000005640">
    <property type="component" value="Unplaced"/>
</dbReference>
<dbReference type="RNAct" id="B7ZC32">
    <property type="molecule type" value="protein"/>
</dbReference>
<dbReference type="GO" id="GO:0005737">
    <property type="term" value="C:cytoplasm"/>
    <property type="evidence" value="ECO:0000318"/>
    <property type="project" value="GO_Central"/>
</dbReference>
<dbReference type="GO" id="GO:0005871">
    <property type="term" value="C:kinesin complex"/>
    <property type="evidence" value="ECO:0000318"/>
    <property type="project" value="GO_Central"/>
</dbReference>
<dbReference type="GO" id="GO:0005874">
    <property type="term" value="C:microtubule"/>
    <property type="evidence" value="ECO:0000318"/>
    <property type="project" value="GO_Central"/>
</dbReference>
<dbReference type="GO" id="GO:0031966">
    <property type="term" value="C:mitochondrial membrane"/>
    <property type="evidence" value="ECO:0000250"/>
    <property type="project" value="UniProtKB"/>
</dbReference>
<dbReference type="GO" id="GO:0005524">
    <property type="term" value="F:ATP binding"/>
    <property type="evidence" value="ECO:0007669"/>
    <property type="project" value="UniProtKB-KW"/>
</dbReference>
<dbReference type="GO" id="GO:0016887">
    <property type="term" value="F:ATP hydrolysis activity"/>
    <property type="evidence" value="ECO:0000318"/>
    <property type="project" value="GO_Central"/>
</dbReference>
<dbReference type="GO" id="GO:0008017">
    <property type="term" value="F:microtubule binding"/>
    <property type="evidence" value="ECO:0000318"/>
    <property type="project" value="GO_Central"/>
</dbReference>
<dbReference type="GO" id="GO:0003777">
    <property type="term" value="F:microtubule motor activity"/>
    <property type="evidence" value="ECO:0000318"/>
    <property type="project" value="GO_Central"/>
</dbReference>
<dbReference type="GO" id="GO:0007005">
    <property type="term" value="P:mitochondrion organization"/>
    <property type="evidence" value="ECO:0000250"/>
    <property type="project" value="UniProtKB"/>
</dbReference>
<dbReference type="GO" id="GO:0072384">
    <property type="term" value="P:organelle transport along microtubule"/>
    <property type="evidence" value="ECO:0000250"/>
    <property type="project" value="UniProtKB"/>
</dbReference>
<dbReference type="GO" id="GO:0047496">
    <property type="term" value="P:vesicle transport along microtubule"/>
    <property type="evidence" value="ECO:0000318"/>
    <property type="project" value="GO_Central"/>
</dbReference>
<dbReference type="CDD" id="cd22709">
    <property type="entry name" value="FHA_KIF28P"/>
    <property type="match status" value="1"/>
</dbReference>
<dbReference type="FunFam" id="3.40.850.10:FF:000063">
    <property type="entry name" value="Kinesin-like protein"/>
    <property type="match status" value="1"/>
</dbReference>
<dbReference type="FunFam" id="2.60.200.20:FF:000034">
    <property type="entry name" value="kinesin-like protein KIF28P"/>
    <property type="match status" value="1"/>
</dbReference>
<dbReference type="Gene3D" id="2.60.200.20">
    <property type="match status" value="1"/>
</dbReference>
<dbReference type="Gene3D" id="3.40.850.10">
    <property type="entry name" value="Kinesin motor domain"/>
    <property type="match status" value="1"/>
</dbReference>
<dbReference type="InterPro" id="IPR000253">
    <property type="entry name" value="FHA_dom"/>
</dbReference>
<dbReference type="InterPro" id="IPR022140">
    <property type="entry name" value="Kinesin-like_KIF1-typ"/>
</dbReference>
<dbReference type="InterPro" id="IPR001752">
    <property type="entry name" value="Kinesin_motor_dom"/>
</dbReference>
<dbReference type="InterPro" id="IPR036961">
    <property type="entry name" value="Kinesin_motor_dom_sf"/>
</dbReference>
<dbReference type="InterPro" id="IPR027417">
    <property type="entry name" value="P-loop_NTPase"/>
</dbReference>
<dbReference type="InterPro" id="IPR008984">
    <property type="entry name" value="SMAD_FHA_dom_sf"/>
</dbReference>
<dbReference type="PANTHER" id="PTHR47117">
    <property type="entry name" value="STAR-RELATED LIPID TRANSFER PROTEIN 9"/>
    <property type="match status" value="1"/>
</dbReference>
<dbReference type="Pfam" id="PF00498">
    <property type="entry name" value="FHA"/>
    <property type="match status" value="1"/>
</dbReference>
<dbReference type="Pfam" id="PF12423">
    <property type="entry name" value="KIF1B"/>
    <property type="match status" value="1"/>
</dbReference>
<dbReference type="Pfam" id="PF00225">
    <property type="entry name" value="Kinesin"/>
    <property type="match status" value="1"/>
</dbReference>
<dbReference type="PRINTS" id="PR00380">
    <property type="entry name" value="KINESINHEAVY"/>
</dbReference>
<dbReference type="SMART" id="SM00129">
    <property type="entry name" value="KISc"/>
    <property type="match status" value="1"/>
</dbReference>
<dbReference type="SUPFAM" id="SSF52540">
    <property type="entry name" value="P-loop containing nucleoside triphosphate hydrolases"/>
    <property type="match status" value="1"/>
</dbReference>
<dbReference type="SUPFAM" id="SSF49879">
    <property type="entry name" value="SMAD/FHA domain"/>
    <property type="match status" value="1"/>
</dbReference>
<dbReference type="PROSITE" id="PS50067">
    <property type="entry name" value="KINESIN_MOTOR_2"/>
    <property type="match status" value="1"/>
</dbReference>
<feature type="chain" id="PRO_0000415569" description="Kinesin-like protein KIF28P">
    <location>
        <begin position="1"/>
        <end position="967"/>
    </location>
</feature>
<feature type="domain" description="Kinesin motor" evidence="3">
    <location>
        <begin position="7"/>
        <end position="355"/>
    </location>
</feature>
<feature type="domain" description="FHA">
    <location>
        <begin position="410"/>
        <end position="472"/>
    </location>
</feature>
<feature type="coiled-coil region" evidence="2">
    <location>
        <begin position="822"/>
        <end position="851"/>
    </location>
</feature>
<feature type="binding site" evidence="3">
    <location>
        <begin position="111"/>
        <end position="118"/>
    </location>
    <ligand>
        <name>ATP</name>
        <dbReference type="ChEBI" id="CHEBI:30616"/>
    </ligand>
</feature>
<gene>
    <name type="primary">KIF28P</name>
    <name type="synonym">KLP6</name>
</gene>
<evidence type="ECO:0000250" key="1"/>
<evidence type="ECO:0000255" key="2"/>
<evidence type="ECO:0000255" key="3">
    <source>
        <dbReference type="PROSITE-ProRule" id="PRU00283"/>
    </source>
</evidence>
<evidence type="ECO:0000305" key="4"/>
<keyword id="KW-0067">ATP-binding</keyword>
<keyword id="KW-0175">Coiled coil</keyword>
<keyword id="KW-0472">Membrane</keyword>
<keyword id="KW-0496">Mitochondrion</keyword>
<keyword id="KW-0505">Motor protein</keyword>
<keyword id="KW-0547">Nucleotide-binding</keyword>
<keyword id="KW-1185">Reference proteome</keyword>
<keyword id="KW-0813">Transport</keyword>
<sequence length="967" mass="108254">MPTQSVDSVKAVRVRPFSQREKNSGSKCVISMHSRTTTTTQDPKNPEHVKTFTFDLAYWSHNGFQRDKDGVLISADPSRKFAGQRDVFHDLGRGILDSAWQGYNATLLAYGQTGSGKSYSMIGFGCKQGIIPTVCEELFRAIENQGRNQEHQVMFSMLEIYKEIIRDLLSRTKKPGGLRIREDQQLGFYVEGLKSVPCENYAQIERLMEQGTKIRTTASTNMNASSSRSHLVITIQFKQVFLDRDLTKQSSINLVDLARSERQKSSGSEGDRLREGSCVNLSLTNLGSVISVLADAAMGKKVLHIPYRDSVLTKLLQSALGGNSRTALVAAVSPADICYEETLSTLRYAERERKIRNRAVANTWTLMRKSRAENSKLLPMMTFPHLLNLSEDPQLTRVLKYFIQAGTQPAPCPRPALSPPHPALRISDKHASFTNADGKVTVTPHSKCKVAVNGVPITTRTKLQHLDRLILGSNSTYLYVGFPSEWGSEDLSRFDYDFFQLERAAAEGASADKLGAADGGDGKAGPSVLAAFQDYIKLMPLVSEANQMSEEPKKGLNMELKVKNLASSDSRGYDLQKEVLVKVTHHGSHEVWIWSKAKFINRKFLMQELYQRFLDGDHGPVARDDDPFWDPVEVVRLGSAHIWLQSLAYCMKLEEQVEFLNCDGLEEAVLHTCIAPCSPTGQTHGEEDVVIDPLELLGKRMDFQIHIVRCLGVNWMKEDAKRGTQIGYRIYDLPNTIYTKPVWKSVNPQIEETVQFAALTASQEFLNYLRTNALIVDLWGLQEGCTELSCSQLGLMVTGEGHILVDTKKISTVKDISQAASNQIPELYLKLLKLEQETEPLRNINRALREENVLLKASLAKTASGQAPKPSNTLKISGMTAQLPSAGEMSQMCTQQAGSDRELAKALKVFYQSMNTARGQLFRLRRHQPPEVDQMLRPFIHQRSQMFKDLGDLRESSLWTLKMTLLL</sequence>
<accession>B7ZC32</accession>
<reference key="1">
    <citation type="journal article" date="2006" name="Nature">
        <title>The DNA sequence and biological annotation of human chromosome 1.</title>
        <authorList>
            <person name="Gregory S.G."/>
            <person name="Barlow K.F."/>
            <person name="McLay K.E."/>
            <person name="Kaul R."/>
            <person name="Swarbreck D."/>
            <person name="Dunham A."/>
            <person name="Scott C.E."/>
            <person name="Howe K.L."/>
            <person name="Woodfine K."/>
            <person name="Spencer C.C.A."/>
            <person name="Jones M.C."/>
            <person name="Gillson C."/>
            <person name="Searle S."/>
            <person name="Zhou Y."/>
            <person name="Kokocinski F."/>
            <person name="McDonald L."/>
            <person name="Evans R."/>
            <person name="Phillips K."/>
            <person name="Atkinson A."/>
            <person name="Cooper R."/>
            <person name="Jones C."/>
            <person name="Hall R.E."/>
            <person name="Andrews T.D."/>
            <person name="Lloyd C."/>
            <person name="Ainscough R."/>
            <person name="Almeida J.P."/>
            <person name="Ambrose K.D."/>
            <person name="Anderson F."/>
            <person name="Andrew R.W."/>
            <person name="Ashwell R.I.S."/>
            <person name="Aubin K."/>
            <person name="Babbage A.K."/>
            <person name="Bagguley C.L."/>
            <person name="Bailey J."/>
            <person name="Beasley H."/>
            <person name="Bethel G."/>
            <person name="Bird C.P."/>
            <person name="Bray-Allen S."/>
            <person name="Brown J.Y."/>
            <person name="Brown A.J."/>
            <person name="Buckley D."/>
            <person name="Burton J."/>
            <person name="Bye J."/>
            <person name="Carder C."/>
            <person name="Chapman J.C."/>
            <person name="Clark S.Y."/>
            <person name="Clarke G."/>
            <person name="Clee C."/>
            <person name="Cobley V."/>
            <person name="Collier R.E."/>
            <person name="Corby N."/>
            <person name="Coville G.J."/>
            <person name="Davies J."/>
            <person name="Deadman R."/>
            <person name="Dunn M."/>
            <person name="Earthrowl M."/>
            <person name="Ellington A.G."/>
            <person name="Errington H."/>
            <person name="Frankish A."/>
            <person name="Frankland J."/>
            <person name="French L."/>
            <person name="Garner P."/>
            <person name="Garnett J."/>
            <person name="Gay L."/>
            <person name="Ghori M.R.J."/>
            <person name="Gibson R."/>
            <person name="Gilby L.M."/>
            <person name="Gillett W."/>
            <person name="Glithero R.J."/>
            <person name="Grafham D.V."/>
            <person name="Griffiths C."/>
            <person name="Griffiths-Jones S."/>
            <person name="Grocock R."/>
            <person name="Hammond S."/>
            <person name="Harrison E.S.I."/>
            <person name="Hart E."/>
            <person name="Haugen E."/>
            <person name="Heath P.D."/>
            <person name="Holmes S."/>
            <person name="Holt K."/>
            <person name="Howden P.J."/>
            <person name="Hunt A.R."/>
            <person name="Hunt S.E."/>
            <person name="Hunter G."/>
            <person name="Isherwood J."/>
            <person name="James R."/>
            <person name="Johnson C."/>
            <person name="Johnson D."/>
            <person name="Joy A."/>
            <person name="Kay M."/>
            <person name="Kershaw J.K."/>
            <person name="Kibukawa M."/>
            <person name="Kimberley A.M."/>
            <person name="King A."/>
            <person name="Knights A.J."/>
            <person name="Lad H."/>
            <person name="Laird G."/>
            <person name="Lawlor S."/>
            <person name="Leongamornlert D.A."/>
            <person name="Lloyd D.M."/>
            <person name="Loveland J."/>
            <person name="Lovell J."/>
            <person name="Lush M.J."/>
            <person name="Lyne R."/>
            <person name="Martin S."/>
            <person name="Mashreghi-Mohammadi M."/>
            <person name="Matthews L."/>
            <person name="Matthews N.S.W."/>
            <person name="McLaren S."/>
            <person name="Milne S."/>
            <person name="Mistry S."/>
            <person name="Moore M.J.F."/>
            <person name="Nickerson T."/>
            <person name="O'Dell C.N."/>
            <person name="Oliver K."/>
            <person name="Palmeiri A."/>
            <person name="Palmer S.A."/>
            <person name="Parker A."/>
            <person name="Patel D."/>
            <person name="Pearce A.V."/>
            <person name="Peck A.I."/>
            <person name="Pelan S."/>
            <person name="Phelps K."/>
            <person name="Phillimore B.J."/>
            <person name="Plumb R."/>
            <person name="Rajan J."/>
            <person name="Raymond C."/>
            <person name="Rouse G."/>
            <person name="Saenphimmachak C."/>
            <person name="Sehra H.K."/>
            <person name="Sheridan E."/>
            <person name="Shownkeen R."/>
            <person name="Sims S."/>
            <person name="Skuce C.D."/>
            <person name="Smith M."/>
            <person name="Steward C."/>
            <person name="Subramanian S."/>
            <person name="Sycamore N."/>
            <person name="Tracey A."/>
            <person name="Tromans A."/>
            <person name="Van Helmond Z."/>
            <person name="Wall M."/>
            <person name="Wallis J.M."/>
            <person name="White S."/>
            <person name="Whitehead S.L."/>
            <person name="Wilkinson J.E."/>
            <person name="Willey D.L."/>
            <person name="Williams H."/>
            <person name="Wilming L."/>
            <person name="Wray P.W."/>
            <person name="Wu Z."/>
            <person name="Coulson A."/>
            <person name="Vaudin M."/>
            <person name="Sulston J.E."/>
            <person name="Durbin R.M."/>
            <person name="Hubbard T."/>
            <person name="Wooster R."/>
            <person name="Dunham I."/>
            <person name="Carter N.P."/>
            <person name="McVean G."/>
            <person name="Ross M.T."/>
            <person name="Harrow J."/>
            <person name="Olson M.V."/>
            <person name="Beck S."/>
            <person name="Rogers J."/>
            <person name="Bentley D.R."/>
        </authorList>
    </citation>
    <scope>NUCLEOTIDE SEQUENCE [LARGE SCALE GENOMIC DNA]</scope>
</reference>
<proteinExistence type="inferred from homology"/>
<comment type="function">
    <text evidence="1">Microtubule-dependent motor protein required for mitochondrion morphology and transport of mitochondria in neuronal cells.</text>
</comment>
<comment type="subcellular location">
    <subcellularLocation>
        <location evidence="1">Mitochondrion membrane</location>
        <topology evidence="1">Peripheral membrane protein</topology>
    </subcellularLocation>
</comment>
<comment type="similarity">
    <text evidence="3">Belongs to the TRAFAC class myosin-kinesin ATPase superfamily. Kinesin family.</text>
</comment>
<comment type="caution">
    <text evidence="4">The sequence of the protein was deduced from the genomic sequence and ESTs by similarity to the mouse and rat sequence.</text>
</comment>
<name>KIF28_HUMAN</name>
<protein>
    <recommendedName>
        <fullName>Kinesin-like protein KIF28P</fullName>
    </recommendedName>
    <alternativeName>
        <fullName>Kinesin-like protein 6</fullName>
    </alternativeName>
</protein>
<organism>
    <name type="scientific">Homo sapiens</name>
    <name type="common">Human</name>
    <dbReference type="NCBI Taxonomy" id="9606"/>
    <lineage>
        <taxon>Eukaryota</taxon>
        <taxon>Metazoa</taxon>
        <taxon>Chordata</taxon>
        <taxon>Craniata</taxon>
        <taxon>Vertebrata</taxon>
        <taxon>Euteleostomi</taxon>
        <taxon>Mammalia</taxon>
        <taxon>Eutheria</taxon>
        <taxon>Euarchontoglires</taxon>
        <taxon>Primates</taxon>
        <taxon>Haplorrhini</taxon>
        <taxon>Catarrhini</taxon>
        <taxon>Hominidae</taxon>
        <taxon>Homo</taxon>
    </lineage>
</organism>